<organism>
    <name type="scientific">Bacillus thuringiensis subsp. konkukian (strain 97-27)</name>
    <dbReference type="NCBI Taxonomy" id="281309"/>
    <lineage>
        <taxon>Bacteria</taxon>
        <taxon>Bacillati</taxon>
        <taxon>Bacillota</taxon>
        <taxon>Bacilli</taxon>
        <taxon>Bacillales</taxon>
        <taxon>Bacillaceae</taxon>
        <taxon>Bacillus</taxon>
        <taxon>Bacillus cereus group</taxon>
    </lineage>
</organism>
<proteinExistence type="inferred from homology"/>
<sequence length="157" mass="17938">MGFPKVERLLINYKTLDEFKKFKGCGAQELSMLEELQANIIENDSESPFYGIYYGGSLIARMSLYMKRNGGEPFEITGTYLELYKLEVLPNFQKQGFGEMLVNYAKGLQFPIKTIARIHSAGFWDKLNFQPVSVPDGDFYVWHPETNLNAVTNEESA</sequence>
<gene>
    <name type="ordered locus">BT9727_3663</name>
</gene>
<evidence type="ECO:0000255" key="1">
    <source>
        <dbReference type="HAMAP-Rule" id="MF_00824"/>
    </source>
</evidence>
<feature type="chain" id="PRO_0000232479" description="Uncharacterized N-acetyltransferase BT9727_3663">
    <location>
        <begin position="1"/>
        <end position="157"/>
    </location>
</feature>
<feature type="domain" description="N-acetyltransferase" evidence="1">
    <location>
        <begin position="9"/>
        <end position="146"/>
    </location>
</feature>
<dbReference type="EC" id="2.3.1.-" evidence="1"/>
<dbReference type="EMBL" id="AE017355">
    <property type="protein sequence ID" value="AAT61591.1"/>
    <property type="molecule type" value="Genomic_DNA"/>
</dbReference>
<dbReference type="RefSeq" id="WP_000506700.1">
    <property type="nucleotide sequence ID" value="NC_005957.1"/>
</dbReference>
<dbReference type="RefSeq" id="YP_037983.1">
    <property type="nucleotide sequence ID" value="NC_005957.1"/>
</dbReference>
<dbReference type="SMR" id="Q6HEP3"/>
<dbReference type="KEGG" id="btk:BT9727_3663"/>
<dbReference type="PATRIC" id="fig|281309.8.peg.3902"/>
<dbReference type="HOGENOM" id="CLU_136634_0_0_9"/>
<dbReference type="Proteomes" id="UP000001301">
    <property type="component" value="Chromosome"/>
</dbReference>
<dbReference type="GO" id="GO:0016747">
    <property type="term" value="F:acyltransferase activity, transferring groups other than amino-acyl groups"/>
    <property type="evidence" value="ECO:0007669"/>
    <property type="project" value="UniProtKB-UniRule"/>
</dbReference>
<dbReference type="CDD" id="cd04301">
    <property type="entry name" value="NAT_SF"/>
    <property type="match status" value="1"/>
</dbReference>
<dbReference type="Gene3D" id="3.40.630.30">
    <property type="match status" value="1"/>
</dbReference>
<dbReference type="HAMAP" id="MF_00824">
    <property type="entry name" value="Acetyltransf_YlbP"/>
    <property type="match status" value="1"/>
</dbReference>
<dbReference type="InterPro" id="IPR016181">
    <property type="entry name" value="Acyl_CoA_acyltransferase"/>
</dbReference>
<dbReference type="InterPro" id="IPR000182">
    <property type="entry name" value="GNAT_dom"/>
</dbReference>
<dbReference type="InterPro" id="IPR017274">
    <property type="entry name" value="YlbP"/>
</dbReference>
<dbReference type="NCBIfam" id="NF010241">
    <property type="entry name" value="PRK13688.1"/>
    <property type="match status" value="1"/>
</dbReference>
<dbReference type="Pfam" id="PF00583">
    <property type="entry name" value="Acetyltransf_1"/>
    <property type="match status" value="1"/>
</dbReference>
<dbReference type="PIRSF" id="PIRSF037732">
    <property type="entry name" value="YlbP_prd"/>
    <property type="match status" value="1"/>
</dbReference>
<dbReference type="SUPFAM" id="SSF55729">
    <property type="entry name" value="Acyl-CoA N-acyltransferases (Nat)"/>
    <property type="match status" value="1"/>
</dbReference>
<accession>Q6HEP3</accession>
<reference key="1">
    <citation type="journal article" date="2006" name="J. Bacteriol.">
        <title>Pathogenomic sequence analysis of Bacillus cereus and Bacillus thuringiensis isolates closely related to Bacillus anthracis.</title>
        <authorList>
            <person name="Han C.S."/>
            <person name="Xie G."/>
            <person name="Challacombe J.F."/>
            <person name="Altherr M.R."/>
            <person name="Bhotika S.S."/>
            <person name="Bruce D."/>
            <person name="Campbell C.S."/>
            <person name="Campbell M.L."/>
            <person name="Chen J."/>
            <person name="Chertkov O."/>
            <person name="Cleland C."/>
            <person name="Dimitrijevic M."/>
            <person name="Doggett N.A."/>
            <person name="Fawcett J.J."/>
            <person name="Glavina T."/>
            <person name="Goodwin L.A."/>
            <person name="Hill K.K."/>
            <person name="Hitchcock P."/>
            <person name="Jackson P.J."/>
            <person name="Keim P."/>
            <person name="Kewalramani A.R."/>
            <person name="Longmire J."/>
            <person name="Lucas S."/>
            <person name="Malfatti S."/>
            <person name="McMurry K."/>
            <person name="Meincke L.J."/>
            <person name="Misra M."/>
            <person name="Moseman B.L."/>
            <person name="Mundt M."/>
            <person name="Munk A.C."/>
            <person name="Okinaka R.T."/>
            <person name="Parson-Quintana B."/>
            <person name="Reilly L.P."/>
            <person name="Richardson P."/>
            <person name="Robinson D.L."/>
            <person name="Rubin E."/>
            <person name="Saunders E."/>
            <person name="Tapia R."/>
            <person name="Tesmer J.G."/>
            <person name="Thayer N."/>
            <person name="Thompson L.S."/>
            <person name="Tice H."/>
            <person name="Ticknor L.O."/>
            <person name="Wills P.L."/>
            <person name="Brettin T.S."/>
            <person name="Gilna P."/>
        </authorList>
    </citation>
    <scope>NUCLEOTIDE SEQUENCE [LARGE SCALE GENOMIC DNA]</scope>
    <source>
        <strain>97-27</strain>
    </source>
</reference>
<protein>
    <recommendedName>
        <fullName evidence="1">Uncharacterized N-acetyltransferase BT9727_3663</fullName>
        <ecNumber evidence="1">2.3.1.-</ecNumber>
    </recommendedName>
</protein>
<keyword id="KW-0012">Acyltransferase</keyword>
<keyword id="KW-0808">Transferase</keyword>
<name>Y3663_BACHK</name>